<evidence type="ECO:0000269" key="1">
    <source>
    </source>
</evidence>
<evidence type="ECO:0000269" key="2">
    <source>
    </source>
</evidence>
<evidence type="ECO:0000269" key="3">
    <source>
    </source>
</evidence>
<evidence type="ECO:0000269" key="4">
    <source>
    </source>
</evidence>
<evidence type="ECO:0000305" key="5"/>
<evidence type="ECO:0000305" key="6">
    <source>
    </source>
</evidence>
<evidence type="ECO:0007829" key="7">
    <source>
        <dbReference type="PDB" id="6A27"/>
    </source>
</evidence>
<evidence type="ECO:0007829" key="8">
    <source>
        <dbReference type="PDB" id="6A29"/>
    </source>
</evidence>
<evidence type="ECO:0007829" key="9">
    <source>
        <dbReference type="PDB" id="6BDU"/>
    </source>
</evidence>
<gene>
    <name type="primary">pprA</name>
    <name type="ordered locus">DR_A0346</name>
</gene>
<accession>O32504</accession>
<comment type="function">
    <text evidence="1 2">dsDNA-binding protein that contributes to the ionizing radiation resistance of D.radiodurans. Plays a role in DNA repair and genome reconstitution, and is necessary for recovery from severe genomic fragmentation as a result of exposure to severe levels of ionizing radiation. In vitro, binds to double-stranded DNA carrying strand breaks and stimulates the DNA end-joining reaction catalyzed by DNA ligases. Thus, PprA plays a critical role in a non-homologous end-joining (NHEJ) pathway for the repair of radiation-induced DNA double-strands breaks. Cannot bind to dsDNA without strand breaks or single-stranded DNA.</text>
</comment>
<comment type="activity regulation">
    <text evidence="4">Phosphorylation increases DNA binding affinity.</text>
</comment>
<comment type="induction">
    <text evidence="1">Induced to high levels following extreme ionizing radiation exposure. Also highly induced in response to desiccation stress.</text>
</comment>
<comment type="PTM">
    <text evidence="4">Phosphorylated by RqkA in vitro. Phosphorylated primarily at Thr-88, and to a little extent at Ser-128 and Thr-160.</text>
</comment>
<comment type="disruption phenotype">
    <text evidence="1">Cells lacking this gene show a reduced growth rate, do not exhibit a decrease in the efficiency of natural transformation, but are much more sensitive to ionizing radiation than the wild-type strain.</text>
</comment>
<comment type="biotechnology">
    <text evidence="3">The PprA protein combined with an immunofluorescence technique can be used to visualize radiation-induced DNA strand breaks in mammalian cultured cells, allowing the evaluation of DNA damage responses. This detection method could also be applicable to genotoxic tests in the environmental and pharmaceutical fields.</text>
</comment>
<comment type="sequence caution" evidence="5">
    <conflict type="erroneous initiation">
        <sequence resource="EMBL-CDS" id="BAA21374"/>
    </conflict>
    <text>Truncated N-terminus.</text>
</comment>
<feature type="chain" id="PRO_0000058551" description="DNA repair protein PprA">
    <location>
        <begin position="1"/>
        <end position="300"/>
    </location>
</feature>
<feature type="modified residue" description="Phosphothreonine" evidence="6">
    <location>
        <position position="88"/>
    </location>
</feature>
<feature type="modified residue" description="Phosphoserine" evidence="6">
    <location>
        <position position="128"/>
    </location>
</feature>
<feature type="modified residue" description="Phosphothreonine" evidence="6">
    <location>
        <position position="160"/>
    </location>
</feature>
<feature type="mutagenesis site" description="Strong decrease in phosphorylation. Lack of phosphorylation; when associated with A-128 and A-160.">
    <original>T</original>
    <variation>A</variation>
    <location>
        <position position="88"/>
    </location>
</feature>
<feature type="mutagenesis site" description="Slight decrease in phosphorylation. Lack of phosphorylation; when associated with A-88 and A-160.">
    <original>S</original>
    <variation>A</variation>
    <location>
        <position position="128"/>
    </location>
</feature>
<feature type="mutagenesis site" description="Slight decrease in phosphorylation. Lack of phosphorylation; when associated with A-88 and A-128.">
    <original>T</original>
    <variation>A</variation>
    <location>
        <position position="160"/>
    </location>
</feature>
<feature type="mutagenesis site" description="In KH311; loss of radiation resistance and DNA-binding ability." evidence="2">
    <original>G</original>
    <variation>E</variation>
    <location>
        <position position="165"/>
    </location>
</feature>
<feature type="helix" evidence="7">
    <location>
        <begin position="29"/>
        <end position="38"/>
    </location>
</feature>
<feature type="turn" evidence="7">
    <location>
        <begin position="39"/>
        <end position="41"/>
    </location>
</feature>
<feature type="helix" evidence="7">
    <location>
        <begin position="46"/>
        <end position="51"/>
    </location>
</feature>
<feature type="helix" evidence="7">
    <location>
        <begin position="56"/>
        <end position="74"/>
    </location>
</feature>
<feature type="strand" evidence="7">
    <location>
        <begin position="83"/>
        <end position="87"/>
    </location>
</feature>
<feature type="strand" evidence="7">
    <location>
        <begin position="93"/>
        <end position="97"/>
    </location>
</feature>
<feature type="strand" evidence="7">
    <location>
        <begin position="100"/>
        <end position="104"/>
    </location>
</feature>
<feature type="helix" evidence="7">
    <location>
        <begin position="105"/>
        <end position="107"/>
    </location>
</feature>
<feature type="helix" evidence="7">
    <location>
        <begin position="109"/>
        <end position="116"/>
    </location>
</feature>
<feature type="helix" evidence="7">
    <location>
        <begin position="117"/>
        <end position="119"/>
    </location>
</feature>
<feature type="strand" evidence="8">
    <location>
        <begin position="132"/>
        <end position="136"/>
    </location>
</feature>
<feature type="helix" evidence="7">
    <location>
        <begin position="145"/>
        <end position="154"/>
    </location>
</feature>
<feature type="strand" evidence="7">
    <location>
        <begin position="156"/>
        <end position="160"/>
    </location>
</feature>
<feature type="strand" evidence="9">
    <location>
        <begin position="163"/>
        <end position="165"/>
    </location>
</feature>
<feature type="helix" evidence="7">
    <location>
        <begin position="166"/>
        <end position="168"/>
    </location>
</feature>
<feature type="strand" evidence="7">
    <location>
        <begin position="170"/>
        <end position="176"/>
    </location>
</feature>
<feature type="strand" evidence="7">
    <location>
        <begin position="179"/>
        <end position="185"/>
    </location>
</feature>
<feature type="helix" evidence="9">
    <location>
        <begin position="190"/>
        <end position="203"/>
    </location>
</feature>
<feature type="helix" evidence="9">
    <location>
        <begin position="208"/>
        <end position="228"/>
    </location>
</feature>
<feature type="helix" evidence="9">
    <location>
        <begin position="232"/>
        <end position="239"/>
    </location>
</feature>
<feature type="helix" evidence="9">
    <location>
        <begin position="243"/>
        <end position="245"/>
    </location>
</feature>
<feature type="strand" evidence="7">
    <location>
        <begin position="251"/>
        <end position="257"/>
    </location>
</feature>
<feature type="helix" evidence="7">
    <location>
        <begin position="258"/>
        <end position="262"/>
    </location>
</feature>
<feature type="helix" evidence="7">
    <location>
        <begin position="266"/>
        <end position="281"/>
    </location>
</feature>
<proteinExistence type="evidence at protein level"/>
<organism>
    <name type="scientific">Deinococcus radiodurans (strain ATCC 13939 / DSM 20539 / JCM 16871 / CCUG 27074 / LMG 4051 / NBRC 15346 / NCIMB 9279 / VKM B-1422 / R1)</name>
    <dbReference type="NCBI Taxonomy" id="243230"/>
    <lineage>
        <taxon>Bacteria</taxon>
        <taxon>Thermotogati</taxon>
        <taxon>Deinococcota</taxon>
        <taxon>Deinococci</taxon>
        <taxon>Deinococcales</taxon>
        <taxon>Deinococcaceae</taxon>
        <taxon>Deinococcus</taxon>
    </lineage>
</organism>
<name>PPRA_DEIRA</name>
<protein>
    <recommendedName>
        <fullName>DNA repair protein PprA</fullName>
    </recommendedName>
    <alternativeName>
        <fullName>Pleiotropic protein promoting DNA repair</fullName>
    </alternativeName>
</protein>
<dbReference type="EMBL" id="AB003475">
    <property type="protein sequence ID" value="BAA21374.1"/>
    <property type="status" value="ALT_INIT"/>
    <property type="molecule type" value="Genomic_DNA"/>
</dbReference>
<dbReference type="EMBL" id="AE001825">
    <property type="protein sequence ID" value="AAF12437.1"/>
    <property type="molecule type" value="Genomic_DNA"/>
</dbReference>
<dbReference type="PIR" id="F75589">
    <property type="entry name" value="F75589"/>
</dbReference>
<dbReference type="RefSeq" id="NP_285669.1">
    <property type="nucleotide sequence ID" value="NC_001264.1"/>
</dbReference>
<dbReference type="RefSeq" id="WP_010889605.1">
    <property type="nucleotide sequence ID" value="NC_001264.1"/>
</dbReference>
<dbReference type="PDB" id="6A27">
    <property type="method" value="X-ray"/>
    <property type="resolution" value="1.35 A"/>
    <property type="chains" value="A/B=17-300"/>
</dbReference>
<dbReference type="PDB" id="6A28">
    <property type="method" value="X-ray"/>
    <property type="resolution" value="2.19 A"/>
    <property type="chains" value="A/B=17-300"/>
</dbReference>
<dbReference type="PDB" id="6A29">
    <property type="method" value="X-ray"/>
    <property type="resolution" value="2.40 A"/>
    <property type="chains" value="A/B/C/D/E/F/G/H=17-300"/>
</dbReference>
<dbReference type="PDB" id="6BDU">
    <property type="method" value="X-ray"/>
    <property type="resolution" value="2.00 A"/>
    <property type="chains" value="A/B=25-300"/>
</dbReference>
<dbReference type="PDB" id="6MC6">
    <property type="method" value="X-ray"/>
    <property type="resolution" value="2.75 A"/>
    <property type="chains" value="A/B=25-300"/>
</dbReference>
<dbReference type="PDB" id="6NEO">
    <property type="method" value="X-ray"/>
    <property type="resolution" value="5.94 A"/>
    <property type="chains" value="B=25-300"/>
</dbReference>
<dbReference type="PDBsum" id="6A27"/>
<dbReference type="PDBsum" id="6A28"/>
<dbReference type="PDBsum" id="6A29"/>
<dbReference type="PDBsum" id="6BDU"/>
<dbReference type="PDBsum" id="6MC6"/>
<dbReference type="PDBsum" id="6NEO"/>
<dbReference type="SMR" id="O32504"/>
<dbReference type="STRING" id="243230.DR_A0346"/>
<dbReference type="iPTMnet" id="O32504"/>
<dbReference type="PaxDb" id="243230-DR_A0346"/>
<dbReference type="EnsemblBacteria" id="AAF12437">
    <property type="protein sequence ID" value="AAF12437"/>
    <property type="gene ID" value="DR_A0346"/>
</dbReference>
<dbReference type="GeneID" id="69519232"/>
<dbReference type="KEGG" id="dra:DR_A0346"/>
<dbReference type="PATRIC" id="fig|243230.17.peg.3238"/>
<dbReference type="HOGENOM" id="CLU_917422_0_0_0"/>
<dbReference type="InParanoid" id="O32504"/>
<dbReference type="OrthoDB" id="62065at2"/>
<dbReference type="Proteomes" id="UP000002524">
    <property type="component" value="Chromosome 2"/>
</dbReference>
<dbReference type="GO" id="GO:0003684">
    <property type="term" value="F:damaged DNA binding"/>
    <property type="evidence" value="ECO:0000314"/>
    <property type="project" value="UniProtKB"/>
</dbReference>
<dbReference type="GO" id="GO:0003690">
    <property type="term" value="F:double-stranded DNA binding"/>
    <property type="evidence" value="ECO:0000314"/>
    <property type="project" value="UniProtKB"/>
</dbReference>
<dbReference type="GO" id="GO:0071465">
    <property type="term" value="P:cellular response to desiccation"/>
    <property type="evidence" value="ECO:0000270"/>
    <property type="project" value="UniProtKB"/>
</dbReference>
<dbReference type="GO" id="GO:0071480">
    <property type="term" value="P:cellular response to gamma radiation"/>
    <property type="evidence" value="ECO:0000270"/>
    <property type="project" value="UniProtKB"/>
</dbReference>
<dbReference type="GO" id="GO:0006281">
    <property type="term" value="P:DNA repair"/>
    <property type="evidence" value="ECO:0000315"/>
    <property type="project" value="UniProtKB"/>
</dbReference>
<dbReference type="GO" id="GO:0006303">
    <property type="term" value="P:double-strand break repair via nonhomologous end joining"/>
    <property type="evidence" value="ECO:0000314"/>
    <property type="project" value="UniProtKB"/>
</dbReference>
<sequence>MLPLAFLICSGHNKGSMARAKAKDQTDGIYAAFDTLMSTAGVDSQIAALAASEADAGTLDAALTQSLQEAQGRWGLGLHHLRHEARLTDDGDIEILTDGRPSARVSEGFGALAQAYAPMQALDERGLSQWAALGEGYRAPGDLPLAQLKVLIEHARDFETDWSAGRGETFQRVWRKGDTLFVEVARPASAEAALSDAAWDVIASIKDRAFQRELMRRSEKDGMLGALLGARHAGAKANLAQLPEAHFTVQAFVQTLSGAAARNAEEYRAALKTAAAALEEYQGVTTRQLSEVLRHGLRES</sequence>
<reference key="1">
    <citation type="submission" date="1997-04" db="EMBL/GenBank/DDBJ databases">
        <title>Isolation and characterization of pprA, a novel Deinococcus radiodurans gene involved in DNA repair.</title>
        <authorList>
            <person name="Narumi I."/>
            <person name="Du Z."/>
            <person name="Alatas Z."/>
            <person name="Kitayama S."/>
            <person name="Watanabe H."/>
        </authorList>
    </citation>
    <scope>NUCLEOTIDE SEQUENCE [GENOMIC DNA]</scope>
    <source>
        <strain>KD8301</strain>
    </source>
</reference>
<reference key="2">
    <citation type="journal article" date="1999" name="Science">
        <title>Genome sequence of the radioresistant bacterium Deinococcus radiodurans R1.</title>
        <authorList>
            <person name="White O."/>
            <person name="Eisen J.A."/>
            <person name="Heidelberg J.F."/>
            <person name="Hickey E.K."/>
            <person name="Peterson J.D."/>
            <person name="Dodson R.J."/>
            <person name="Haft D.H."/>
            <person name="Gwinn M.L."/>
            <person name="Nelson W.C."/>
            <person name="Richardson D.L."/>
            <person name="Moffat K.S."/>
            <person name="Qin H."/>
            <person name="Jiang L."/>
            <person name="Pamphile W."/>
            <person name="Crosby M."/>
            <person name="Shen M."/>
            <person name="Vamathevan J.J."/>
            <person name="Lam P."/>
            <person name="McDonald L.A."/>
            <person name="Utterback T.R."/>
            <person name="Zalewski C."/>
            <person name="Makarova K.S."/>
            <person name="Aravind L."/>
            <person name="Daly M.J."/>
            <person name="Minton K.W."/>
            <person name="Fleischmann R.D."/>
            <person name="Ketchum K.A."/>
            <person name="Nelson K.E."/>
            <person name="Salzberg S.L."/>
            <person name="Smith H.O."/>
            <person name="Venter J.C."/>
            <person name="Fraser C.M."/>
        </authorList>
    </citation>
    <scope>NUCLEOTIDE SEQUENCE [LARGE SCALE GENOMIC DNA]</scope>
    <source>
        <strain>ATCC 13939 / DSM 20539 / JCM 16871 / CCUG 27074 / LMG 4051 / NBRC 15346 / NCIMB 9279 / VKM B-1422 / R1</strain>
    </source>
</reference>
<reference key="3">
    <citation type="journal article" date="2004" name="Genetics">
        <title>Analysis of Deinococcus radiodurans's transcriptional response to ionizing radiation and desiccation reveals novel proteins that contribute to extreme radioresistance.</title>
        <authorList>
            <person name="Tanaka M."/>
            <person name="Earl A.M."/>
            <person name="Howell H.A."/>
            <person name="Park M.J."/>
            <person name="Eisen J.A."/>
            <person name="Peterson S.N."/>
            <person name="Battista J.R."/>
        </authorList>
    </citation>
    <scope>INDUCTION</scope>
    <scope>ROLE IN RADIORESISTANCE</scope>
    <scope>DISRUPTION PHENOTYPE</scope>
    <source>
        <strain>ATCC 13939 / DSM 20539 / JCM 16871 / CCUG 27074 / LMG 4051 / NBRC 15346 / NCIMB 9279 / VKM B-1422 / R1</strain>
    </source>
</reference>
<reference key="4">
    <citation type="journal article" date="2004" name="Mol. Microbiol.">
        <title>PprA: a novel protein from Deinococcus radiodurans that stimulates DNA ligation.</title>
        <authorList>
            <person name="Narumi I."/>
            <person name="Satoh K."/>
            <person name="Cui S."/>
            <person name="Funayama T."/>
            <person name="Kitayama S."/>
            <person name="Watanabe H."/>
        </authorList>
    </citation>
    <scope>FUNCTION</scope>
    <scope>MUTAGENESIS OF GLY-165</scope>
</reference>
<reference key="5">
    <citation type="journal article" date="2006" name="Mutat. Res.">
        <title>Method for detecting DNA strand breaks in mammalian cells using the Deinococcus radiodurans PprA protein.</title>
        <authorList>
            <person name="Satoh K."/>
            <person name="Wada S."/>
            <person name="Kikuchi M."/>
            <person name="Funayama T."/>
            <person name="Narumi I."/>
            <person name="Kobayashi Y."/>
        </authorList>
    </citation>
    <scope>BIOTECHNOLOGY</scope>
</reference>
<reference key="6">
    <citation type="journal article" date="2013" name="Int. J. Biochem. Cell Biol.">
        <title>Structure-function study of deinococcal serine/threonine protein kinase implicates its kinase activity and DNA repair protein phosphorylation roles in radioresistance of Deinococcus radiodurans.</title>
        <authorList>
            <person name="Rajpurohit Y.S."/>
            <person name="Misra H.S."/>
        </authorList>
    </citation>
    <scope>PHOSPHORYLATION AT THR-88; SER-128 AND THR-160</scope>
    <scope>ACTIVITY REGULATION</scope>
    <scope>DNA-BINDING</scope>
    <source>
        <strain>ATCC 13939 / DSM 20539 / JCM 16871 / CCUG 27074 / LMG 4051 / NBRC 15346 / NCIMB 9279 / VKM B-1422 / R1</strain>
    </source>
</reference>
<keyword id="KW-0002">3D-structure</keyword>
<keyword id="KW-0227">DNA damage</keyword>
<keyword id="KW-0234">DNA repair</keyword>
<keyword id="KW-0238">DNA-binding</keyword>
<keyword id="KW-0597">Phosphoprotein</keyword>
<keyword id="KW-1185">Reference proteome</keyword>
<keyword id="KW-0346">Stress response</keyword>